<dbReference type="EC" id="3.2.1.14" evidence="3 4"/>
<dbReference type="EMBL" id="D87063">
    <property type="protein sequence ID" value="BAA35140.2"/>
    <property type="molecule type" value="Genomic_DNA"/>
</dbReference>
<dbReference type="SMR" id="Q92222"/>
<dbReference type="CAZy" id="GH18">
    <property type="family name" value="Glycoside Hydrolase Family 18"/>
</dbReference>
<dbReference type="GlyCosmos" id="Q92222">
    <property type="glycosylation" value="2 sites, No reported glycans"/>
</dbReference>
<dbReference type="OMA" id="SYPESKY"/>
<dbReference type="GO" id="GO:0005576">
    <property type="term" value="C:extracellular region"/>
    <property type="evidence" value="ECO:0007669"/>
    <property type="project" value="UniProtKB-SubCell"/>
</dbReference>
<dbReference type="GO" id="GO:0008061">
    <property type="term" value="F:chitin binding"/>
    <property type="evidence" value="ECO:0007669"/>
    <property type="project" value="InterPro"/>
</dbReference>
<dbReference type="GO" id="GO:0008843">
    <property type="term" value="F:endochitinase activity"/>
    <property type="evidence" value="ECO:0007669"/>
    <property type="project" value="UniProtKB-EC"/>
</dbReference>
<dbReference type="GO" id="GO:0006032">
    <property type="term" value="P:chitin catabolic process"/>
    <property type="evidence" value="ECO:0007669"/>
    <property type="project" value="UniProtKB-KW"/>
</dbReference>
<dbReference type="GO" id="GO:0000272">
    <property type="term" value="P:polysaccharide catabolic process"/>
    <property type="evidence" value="ECO:0007669"/>
    <property type="project" value="UniProtKB-KW"/>
</dbReference>
<dbReference type="CDD" id="cd06548">
    <property type="entry name" value="GH18_chitinase"/>
    <property type="match status" value="1"/>
</dbReference>
<dbReference type="FunFam" id="3.10.50.10:FF:000005">
    <property type="entry name" value="Endochitinase B1"/>
    <property type="match status" value="1"/>
</dbReference>
<dbReference type="FunFam" id="3.20.20.80:FF:000095">
    <property type="entry name" value="Endochitinase B1"/>
    <property type="match status" value="1"/>
</dbReference>
<dbReference type="Gene3D" id="3.10.50.10">
    <property type="match status" value="1"/>
</dbReference>
<dbReference type="Gene3D" id="3.20.20.80">
    <property type="entry name" value="Glycosidases"/>
    <property type="match status" value="1"/>
</dbReference>
<dbReference type="InterPro" id="IPR011583">
    <property type="entry name" value="Chitinase_II/V-like_cat"/>
</dbReference>
<dbReference type="InterPro" id="IPR029070">
    <property type="entry name" value="Chitinase_insertion_sf"/>
</dbReference>
<dbReference type="InterPro" id="IPR001223">
    <property type="entry name" value="Glyco_hydro18_cat"/>
</dbReference>
<dbReference type="InterPro" id="IPR001579">
    <property type="entry name" value="Glyco_hydro_18_chit_AS"/>
</dbReference>
<dbReference type="InterPro" id="IPR017853">
    <property type="entry name" value="Glycoside_hydrolase_SF"/>
</dbReference>
<dbReference type="InterPro" id="IPR050314">
    <property type="entry name" value="Glycosyl_Hydrlase_18"/>
</dbReference>
<dbReference type="PANTHER" id="PTHR11177">
    <property type="entry name" value="CHITINASE"/>
    <property type="match status" value="1"/>
</dbReference>
<dbReference type="PANTHER" id="PTHR11177:SF365">
    <property type="entry name" value="ENDOCHITINASE B"/>
    <property type="match status" value="1"/>
</dbReference>
<dbReference type="Pfam" id="PF00704">
    <property type="entry name" value="Glyco_hydro_18"/>
    <property type="match status" value="1"/>
</dbReference>
<dbReference type="SMART" id="SM00636">
    <property type="entry name" value="Glyco_18"/>
    <property type="match status" value="1"/>
</dbReference>
<dbReference type="SUPFAM" id="SSF51445">
    <property type="entry name" value="(Trans)glycosidases"/>
    <property type="match status" value="1"/>
</dbReference>
<dbReference type="SUPFAM" id="SSF54556">
    <property type="entry name" value="Chitinase insertion domain"/>
    <property type="match status" value="1"/>
</dbReference>
<dbReference type="PROSITE" id="PS01095">
    <property type="entry name" value="GH18_1"/>
    <property type="match status" value="1"/>
</dbReference>
<dbReference type="PROSITE" id="PS51910">
    <property type="entry name" value="GH18_2"/>
    <property type="match status" value="1"/>
</dbReference>
<reference key="1">
    <citation type="journal article" date="2007" name="Curr. Genet.">
        <title>A chitinase gene, chiB, involved in the autolytic process of Aspergillus nidulans.</title>
        <authorList>
            <person name="Yamazaki H."/>
            <person name="Yamazaki D."/>
            <person name="Takaya N."/>
            <person name="Takagi M."/>
            <person name="Ohta A."/>
            <person name="Horiuchi H."/>
        </authorList>
    </citation>
    <scope>NUCLEOTIDE SEQUENCE [GENOMIC DNA]</scope>
    <scope>FUNCTION</scope>
    <scope>CATALYTIC ACTIVITY</scope>
    <scope>DISRUPTION PHENOTYPE</scope>
    <scope>INDUCTION</scope>
    <source>
        <strain>FGSC 89</strain>
    </source>
</reference>
<reference key="2">
    <citation type="journal article" date="2006" name="Folia Microbiol. (Praha)">
        <title>Comparative studies of differential expression of chitinolytic enzymes encoded by chiA, chiB, chiC and nagA genes in Aspergillus nidulans.</title>
        <authorList>
            <person name="Pusztahelyi T."/>
            <person name="Molnar Z."/>
            <person name="Emri T."/>
            <person name="Klement E."/>
            <person name="Miskei M."/>
            <person name="Kerekgyarto J."/>
            <person name="Balla J."/>
            <person name="Pocsi I."/>
        </authorList>
    </citation>
    <scope>FUNCTION</scope>
    <scope>CATALYTIC ACTIVITY</scope>
    <scope>SUBSTRATE SPECIFICITY</scope>
    <scope>SUBCELLULAR LOCATION</scope>
    <scope>DEVELOPMENTAL STAGE</scope>
    <scope>INDUCTION</scope>
    <scope>IDENTIFICATION BY MASS SPECTROMETRY</scope>
    <source>
        <strain evidence="6">FGSC 26</strain>
    </source>
</reference>
<gene>
    <name evidence="5 6" type="primary">chiB</name>
</gene>
<proteinExistence type="evidence at protein level"/>
<evidence type="ECO:0000255" key="1"/>
<evidence type="ECO:0000255" key="2">
    <source>
        <dbReference type="PROSITE-ProRule" id="PRU01258"/>
    </source>
</evidence>
<evidence type="ECO:0000269" key="3">
    <source>
    </source>
</evidence>
<evidence type="ECO:0000269" key="4">
    <source>
    </source>
</evidence>
<evidence type="ECO:0000303" key="5">
    <source>
    </source>
</evidence>
<evidence type="ECO:0000303" key="6">
    <source>
    </source>
</evidence>
<evidence type="ECO:0000305" key="7"/>
<name>CHIB_EMEND</name>
<accession>Q92222</accession>
<accession>Q5B3K9</accession>
<sequence length="398" mass="44206">MSGYKTVGYFVNWAIYGRNYNPQDLPAEKLTHILYAFANVRPETGEVYLSDTWSDIEKHYPTDSWNDTGNNVYGCVKQLGLLKRQHRQLKVLLSIGGWTYSPNFTNGAGTPENRARFAQTATKLITDLGFDGIDIDWEYPQNDQQAQNYVDLLRRCREALNAAQGQRRFQLTVAVPAGPDNYNKLRLQEMTPYLDFYNLMAYDYAGSWDQTAGHQANLYPSTSNPTSTPFNTVQAVNHYIDAGGVPSNKIILGMPIYGRAFQNTDGPGRPYSGIGQGTWEQGVYDYKALPRPGATEQLDTNIGASWSYDPSSREMVSYDTVAAADLKAAYIQSRRLGGAMWWETSADKGGKTANKADGSLIGTFVEDVGGVNNLDRTQNAISYPDSQYDNLKAGFPSS</sequence>
<protein>
    <recommendedName>
        <fullName evidence="6">Endochitinase B</fullName>
        <ecNumber evidence="3 4">3.2.1.14</ecNumber>
    </recommendedName>
    <alternativeName>
        <fullName evidence="5">Chitinase B</fullName>
    </alternativeName>
</protein>
<comment type="function">
    <text evidence="3 4">Major secreted chitinase involved in the degradation of chitin, a component of the cell walls of fungi and exoskeletal elements of some animals (including worms and arthropods) (PubMed:17119968, PubMed:17455791). Plays a role in the morphogenesis and autolysis. Has also significant antifungal activity against various fungal species (PubMed:17119968). Hydrolyzes chitin. Hydrolyzes glycol chitosan very effectively and also liberates reducing sugars from cell debris. Hydrolyzes synthetic substrates 4-nitrophenyl N,N'-diacetyl-beta-D-chitobioside (4NP(GlcNAc)2) and 4-nitrophenyl N,N',N''-triacetyl-beta-D-chitotrioside (4NP(GlcNAc)3), but has no activity against 4-nitrophenyl N-acetyl-beta-D-glucosaminide (4NPGlcNAc) (PubMed:17455791).</text>
</comment>
<comment type="catalytic activity">
    <reaction evidence="3 4">
        <text>Random endo-hydrolysis of N-acetyl-beta-D-glucosaminide (1-&gt;4)-beta-linkages in chitin and chitodextrins.</text>
        <dbReference type="EC" id="3.2.1.14"/>
    </reaction>
</comment>
<comment type="subcellular location">
    <subcellularLocation>
        <location evidence="4">Secreted</location>
    </subcellularLocation>
</comment>
<comment type="developmental stage">
    <text evidence="4">Highly expressed during the stationary phase and high levels remain in the autolytic stage.</text>
</comment>
<comment type="induction">
    <text evidence="3 4">Expression is increased when the wild-type mycelia are starved for carbon sources, a condition that induces hyphal autolysis (PubMed:17119968). Significantly up-regulated expression with colloidal chitin and chito-oligomers, namely N-acetyl-D-glucosamine (GlcNAc), N,N'-diacetylchitobiose (GlcNAc)2 and N,N',N''-triacetylchitotriose (GlcNAc)3. Expression is not affected by changes in the levels of reactive oxygen species or in the glutathione-glutathione disulfide redox balance, the changes which are physiological characteristics developing in aging and autolyzing fungal cultures. Down-regulated by the oxidative-stress-generating agent diamide, but not by menadione or hydrogen peroxide (PubMed:17455791).</text>
</comment>
<comment type="disruption phenotype">
    <text evidence="3">Does not affect germination efficiency nor hyphal growth rate, but considerably reduces the intracellular and extracellular chitinase activities.</text>
</comment>
<comment type="similarity">
    <text evidence="7">Belongs to the glycosyl hydrolase 18 family. Chitinase class V subfamily.</text>
</comment>
<feature type="chain" id="PRO_0000429826" description="Endochitinase B">
    <location>
        <begin position="1"/>
        <end position="398"/>
    </location>
</feature>
<feature type="domain" description="GH18" evidence="2">
    <location>
        <begin position="4"/>
        <end position="363"/>
    </location>
</feature>
<feature type="active site" description="Proton donor" evidence="2">
    <location>
        <position position="138"/>
    </location>
</feature>
<feature type="binding site" evidence="2">
    <location>
        <begin position="69"/>
        <end position="70"/>
    </location>
    <ligand>
        <name>chitin</name>
        <dbReference type="ChEBI" id="CHEBI:17029"/>
    </ligand>
</feature>
<feature type="binding site" evidence="2">
    <location>
        <begin position="96"/>
        <end position="99"/>
    </location>
    <ligand>
        <name>chitin</name>
        <dbReference type="ChEBI" id="CHEBI:17029"/>
    </ligand>
</feature>
<feature type="binding site" evidence="2">
    <location>
        <position position="139"/>
    </location>
    <ligand>
        <name>chitin</name>
        <dbReference type="ChEBI" id="CHEBI:17029"/>
    </ligand>
</feature>
<feature type="binding site" evidence="2">
    <location>
        <begin position="200"/>
        <end position="203"/>
    </location>
    <ligand>
        <name>chitin</name>
        <dbReference type="ChEBI" id="CHEBI:17029"/>
    </ligand>
</feature>
<feature type="binding site" evidence="2">
    <location>
        <position position="342"/>
    </location>
    <ligand>
        <name>chitin</name>
        <dbReference type="ChEBI" id="CHEBI:17029"/>
    </ligand>
</feature>
<feature type="glycosylation site" description="N-linked (GlcNAc...) asparagine" evidence="1">
    <location>
        <position position="66"/>
    </location>
</feature>
<feature type="glycosylation site" description="N-linked (GlcNAc...) asparagine" evidence="1">
    <location>
        <position position="103"/>
    </location>
</feature>
<keyword id="KW-0119">Carbohydrate metabolism</keyword>
<keyword id="KW-0146">Chitin degradation</keyword>
<keyword id="KW-0325">Glycoprotein</keyword>
<keyword id="KW-0326">Glycosidase</keyword>
<keyword id="KW-0378">Hydrolase</keyword>
<keyword id="KW-0624">Polysaccharide degradation</keyword>
<keyword id="KW-0964">Secreted</keyword>
<organism>
    <name type="scientific">Emericella nidulans</name>
    <name type="common">Aspergillus nidulans</name>
    <dbReference type="NCBI Taxonomy" id="162425"/>
    <lineage>
        <taxon>Eukaryota</taxon>
        <taxon>Fungi</taxon>
        <taxon>Dikarya</taxon>
        <taxon>Ascomycota</taxon>
        <taxon>Pezizomycotina</taxon>
        <taxon>Eurotiomycetes</taxon>
        <taxon>Eurotiomycetidae</taxon>
        <taxon>Eurotiales</taxon>
        <taxon>Aspergillaceae</taxon>
        <taxon>Aspergillus</taxon>
        <taxon>Aspergillus subgen. Nidulantes</taxon>
    </lineage>
</organism>